<accession>P50096</accession>
<accession>Q7TSG7</accession>
<gene>
    <name type="primary">Impdh1</name>
</gene>
<reference key="1">
    <citation type="journal article" date="1993" name="Biochem. Biophys. Res. Commun.">
        <title>Type I inosine monophosphate dehydrogenase: evidence for a single functional gene in mammalian species.</title>
        <authorList>
            <person name="Dayton J.S."/>
            <person name="Mitchell B.S."/>
        </authorList>
    </citation>
    <scope>NUCLEOTIDE SEQUENCE [MRNA]</scope>
    <source>
        <tissue>Leukemia</tissue>
    </source>
</reference>
<reference key="2">
    <citation type="journal article" date="2005" name="Science">
        <title>The transcriptional landscape of the mammalian genome.</title>
        <authorList>
            <person name="Carninci P."/>
            <person name="Kasukawa T."/>
            <person name="Katayama S."/>
            <person name="Gough J."/>
            <person name="Frith M.C."/>
            <person name="Maeda N."/>
            <person name="Oyama R."/>
            <person name="Ravasi T."/>
            <person name="Lenhard B."/>
            <person name="Wells C."/>
            <person name="Kodzius R."/>
            <person name="Shimokawa K."/>
            <person name="Bajic V.B."/>
            <person name="Brenner S.E."/>
            <person name="Batalov S."/>
            <person name="Forrest A.R."/>
            <person name="Zavolan M."/>
            <person name="Davis M.J."/>
            <person name="Wilming L.G."/>
            <person name="Aidinis V."/>
            <person name="Allen J.E."/>
            <person name="Ambesi-Impiombato A."/>
            <person name="Apweiler R."/>
            <person name="Aturaliya R.N."/>
            <person name="Bailey T.L."/>
            <person name="Bansal M."/>
            <person name="Baxter L."/>
            <person name="Beisel K.W."/>
            <person name="Bersano T."/>
            <person name="Bono H."/>
            <person name="Chalk A.M."/>
            <person name="Chiu K.P."/>
            <person name="Choudhary V."/>
            <person name="Christoffels A."/>
            <person name="Clutterbuck D.R."/>
            <person name="Crowe M.L."/>
            <person name="Dalla E."/>
            <person name="Dalrymple B.P."/>
            <person name="de Bono B."/>
            <person name="Della Gatta G."/>
            <person name="di Bernardo D."/>
            <person name="Down T."/>
            <person name="Engstrom P."/>
            <person name="Fagiolini M."/>
            <person name="Faulkner G."/>
            <person name="Fletcher C.F."/>
            <person name="Fukushima T."/>
            <person name="Furuno M."/>
            <person name="Futaki S."/>
            <person name="Gariboldi M."/>
            <person name="Georgii-Hemming P."/>
            <person name="Gingeras T.R."/>
            <person name="Gojobori T."/>
            <person name="Green R.E."/>
            <person name="Gustincich S."/>
            <person name="Harbers M."/>
            <person name="Hayashi Y."/>
            <person name="Hensch T.K."/>
            <person name="Hirokawa N."/>
            <person name="Hill D."/>
            <person name="Huminiecki L."/>
            <person name="Iacono M."/>
            <person name="Ikeo K."/>
            <person name="Iwama A."/>
            <person name="Ishikawa T."/>
            <person name="Jakt M."/>
            <person name="Kanapin A."/>
            <person name="Katoh M."/>
            <person name="Kawasawa Y."/>
            <person name="Kelso J."/>
            <person name="Kitamura H."/>
            <person name="Kitano H."/>
            <person name="Kollias G."/>
            <person name="Krishnan S.P."/>
            <person name="Kruger A."/>
            <person name="Kummerfeld S.K."/>
            <person name="Kurochkin I.V."/>
            <person name="Lareau L.F."/>
            <person name="Lazarevic D."/>
            <person name="Lipovich L."/>
            <person name="Liu J."/>
            <person name="Liuni S."/>
            <person name="McWilliam S."/>
            <person name="Madan Babu M."/>
            <person name="Madera M."/>
            <person name="Marchionni L."/>
            <person name="Matsuda H."/>
            <person name="Matsuzawa S."/>
            <person name="Miki H."/>
            <person name="Mignone F."/>
            <person name="Miyake S."/>
            <person name="Morris K."/>
            <person name="Mottagui-Tabar S."/>
            <person name="Mulder N."/>
            <person name="Nakano N."/>
            <person name="Nakauchi H."/>
            <person name="Ng P."/>
            <person name="Nilsson R."/>
            <person name="Nishiguchi S."/>
            <person name="Nishikawa S."/>
            <person name="Nori F."/>
            <person name="Ohara O."/>
            <person name="Okazaki Y."/>
            <person name="Orlando V."/>
            <person name="Pang K.C."/>
            <person name="Pavan W.J."/>
            <person name="Pavesi G."/>
            <person name="Pesole G."/>
            <person name="Petrovsky N."/>
            <person name="Piazza S."/>
            <person name="Reed J."/>
            <person name="Reid J.F."/>
            <person name="Ring B.Z."/>
            <person name="Ringwald M."/>
            <person name="Rost B."/>
            <person name="Ruan Y."/>
            <person name="Salzberg S.L."/>
            <person name="Sandelin A."/>
            <person name="Schneider C."/>
            <person name="Schoenbach C."/>
            <person name="Sekiguchi K."/>
            <person name="Semple C.A."/>
            <person name="Seno S."/>
            <person name="Sessa L."/>
            <person name="Sheng Y."/>
            <person name="Shibata Y."/>
            <person name="Shimada H."/>
            <person name="Shimada K."/>
            <person name="Silva D."/>
            <person name="Sinclair B."/>
            <person name="Sperling S."/>
            <person name="Stupka E."/>
            <person name="Sugiura K."/>
            <person name="Sultana R."/>
            <person name="Takenaka Y."/>
            <person name="Taki K."/>
            <person name="Tammoja K."/>
            <person name="Tan S.L."/>
            <person name="Tang S."/>
            <person name="Taylor M.S."/>
            <person name="Tegner J."/>
            <person name="Teichmann S.A."/>
            <person name="Ueda H.R."/>
            <person name="van Nimwegen E."/>
            <person name="Verardo R."/>
            <person name="Wei C.L."/>
            <person name="Yagi K."/>
            <person name="Yamanishi H."/>
            <person name="Zabarovsky E."/>
            <person name="Zhu S."/>
            <person name="Zimmer A."/>
            <person name="Hide W."/>
            <person name="Bult C."/>
            <person name="Grimmond S.M."/>
            <person name="Teasdale R.D."/>
            <person name="Liu E.T."/>
            <person name="Brusic V."/>
            <person name="Quackenbush J."/>
            <person name="Wahlestedt C."/>
            <person name="Mattick J.S."/>
            <person name="Hume D.A."/>
            <person name="Kai C."/>
            <person name="Sasaki D."/>
            <person name="Tomaru Y."/>
            <person name="Fukuda S."/>
            <person name="Kanamori-Katayama M."/>
            <person name="Suzuki M."/>
            <person name="Aoki J."/>
            <person name="Arakawa T."/>
            <person name="Iida J."/>
            <person name="Imamura K."/>
            <person name="Itoh M."/>
            <person name="Kato T."/>
            <person name="Kawaji H."/>
            <person name="Kawagashira N."/>
            <person name="Kawashima T."/>
            <person name="Kojima M."/>
            <person name="Kondo S."/>
            <person name="Konno H."/>
            <person name="Nakano K."/>
            <person name="Ninomiya N."/>
            <person name="Nishio T."/>
            <person name="Okada M."/>
            <person name="Plessy C."/>
            <person name="Shibata K."/>
            <person name="Shiraki T."/>
            <person name="Suzuki S."/>
            <person name="Tagami M."/>
            <person name="Waki K."/>
            <person name="Watahiki A."/>
            <person name="Okamura-Oho Y."/>
            <person name="Suzuki H."/>
            <person name="Kawai J."/>
            <person name="Hayashizaki Y."/>
        </authorList>
    </citation>
    <scope>NUCLEOTIDE SEQUENCE [LARGE SCALE MRNA]</scope>
    <source>
        <strain>NOD</strain>
    </source>
</reference>
<reference key="3">
    <citation type="submission" date="2005-09" db="EMBL/GenBank/DDBJ databases">
        <authorList>
            <person name="Mural R.J."/>
            <person name="Adams M.D."/>
            <person name="Myers E.W."/>
            <person name="Smith H.O."/>
            <person name="Venter J.C."/>
        </authorList>
    </citation>
    <scope>NUCLEOTIDE SEQUENCE [LARGE SCALE GENOMIC DNA]</scope>
</reference>
<reference key="4">
    <citation type="journal article" date="2004" name="Genome Res.">
        <title>The status, quality, and expansion of the NIH full-length cDNA project: the Mammalian Gene Collection (MGC).</title>
        <authorList>
            <consortium name="The MGC Project Team"/>
        </authorList>
    </citation>
    <scope>NUCLEOTIDE SEQUENCE [LARGE SCALE MRNA]</scope>
    <source>
        <tissue>Brain</tissue>
    </source>
</reference>
<reference key="5">
    <citation type="journal article" date="2010" name="Cell">
        <title>A tissue-specific atlas of mouse protein phosphorylation and expression.</title>
        <authorList>
            <person name="Huttlin E.L."/>
            <person name="Jedrychowski M.P."/>
            <person name="Elias J.E."/>
            <person name="Goswami T."/>
            <person name="Rad R."/>
            <person name="Beausoleil S.A."/>
            <person name="Villen J."/>
            <person name="Haas W."/>
            <person name="Sowa M.E."/>
            <person name="Gygi S.P."/>
        </authorList>
    </citation>
    <scope>IDENTIFICATION BY MASS SPECTROMETRY [LARGE SCALE ANALYSIS]</scope>
    <source>
        <tissue>Brown adipose tissue</tissue>
        <tissue>Lung</tissue>
        <tissue>Pancreas</tissue>
        <tissue>Spleen</tissue>
    </source>
</reference>
<reference key="6">
    <citation type="journal article" date="2014" name="Mol. Cell. Proteomics">
        <title>Immunoaffinity enrichment and mass spectrometry analysis of protein methylation.</title>
        <authorList>
            <person name="Guo A."/>
            <person name="Gu H."/>
            <person name="Zhou J."/>
            <person name="Mulhern D."/>
            <person name="Wang Y."/>
            <person name="Lee K.A."/>
            <person name="Yang V."/>
            <person name="Aguiar M."/>
            <person name="Kornhauser J."/>
            <person name="Jia X."/>
            <person name="Ren J."/>
            <person name="Beausoleil S.A."/>
            <person name="Silva J.C."/>
            <person name="Vemulapalli V."/>
            <person name="Bedford M.T."/>
            <person name="Comb M.J."/>
        </authorList>
    </citation>
    <scope>METHYLATION [LARGE SCALE ANALYSIS] AT ARG-341 AND ARG-355</scope>
    <scope>IDENTIFICATION BY MASS SPECTROMETRY [LARGE SCALE ANALYSIS]</scope>
    <source>
        <tissue>Embryo</tissue>
    </source>
</reference>
<sequence length="514" mass="55279">MADYLISGGTGYVPEDGLTAQQLFANADGLTYNDFLILPGFIDFIADEVDLTSALTRKITLKTPLISSPMDTVTEADMAIAMALMGGIGFIHHNCTPEFQANEVRKVKKFEQGFITDPVVLSPSHTVGDVLEAKIQHGFSGIPITATGTMGSKLVGIVTSRDIDFLAEKDHTTLLSEVMTPRVELVVAPAGVTLKEANEILQRSKKGKLPIVNDQDELVAIIARTDLKKNRDYPLASKDSHKQLLCGAAVGTREDDKYRLDLLTQAGADVIVLDSSQGNSVYQIAMVHYIKQKYPHLQVIGGNVVTAAQAKNLIDAGVDGLRVGMGCGSICITQEVMACGRPQGTAVYKVAEYARRFGVPVIADGGIQTVGHVVKALALGASTVMMGSLLAATTEAPGEYFFSDGVRLKKYRGMGSLDAMEKSSSSQKRYFSEGDKVKIAQGVSGSIQDKGSIQKFVPYLIAGIQHGCQDIGAQSLSVLRSMMYSGELKFEKRTMSAQIEGGVHGLHSYEKRLY</sequence>
<feature type="chain" id="PRO_0000093671" description="Inosine-5'-monophosphate dehydrogenase 1">
    <location>
        <begin position="1"/>
        <end position="514"/>
    </location>
</feature>
<feature type="domain" description="CBS 1" evidence="2">
    <location>
        <begin position="114"/>
        <end position="173"/>
    </location>
</feature>
<feature type="domain" description="CBS 2" evidence="2">
    <location>
        <begin position="179"/>
        <end position="237"/>
    </location>
</feature>
<feature type="active site" description="Thioimidate intermediate" evidence="2">
    <location>
        <position position="331"/>
    </location>
</feature>
<feature type="active site" description="Proton acceptor" evidence="2">
    <location>
        <position position="429"/>
    </location>
</feature>
<feature type="binding site" evidence="2">
    <location>
        <begin position="274"/>
        <end position="276"/>
    </location>
    <ligand>
        <name>NAD(+)</name>
        <dbReference type="ChEBI" id="CHEBI:57540"/>
    </ligand>
</feature>
<feature type="binding site" evidence="2">
    <location>
        <begin position="324"/>
        <end position="326"/>
    </location>
    <ligand>
        <name>NAD(+)</name>
        <dbReference type="ChEBI" id="CHEBI:57540"/>
    </ligand>
</feature>
<feature type="binding site" description="in other chain" evidence="2">
    <location>
        <position position="326"/>
    </location>
    <ligand>
        <name>K(+)</name>
        <dbReference type="ChEBI" id="CHEBI:29103"/>
        <note>ligand shared between two tetrameric partners</note>
    </ligand>
</feature>
<feature type="binding site" description="in other chain" evidence="2">
    <location>
        <position position="328"/>
    </location>
    <ligand>
        <name>K(+)</name>
        <dbReference type="ChEBI" id="CHEBI:29103"/>
        <note>ligand shared between two tetrameric partners</note>
    </ligand>
</feature>
<feature type="binding site" evidence="2">
    <location>
        <position position="329"/>
    </location>
    <ligand>
        <name>IMP</name>
        <dbReference type="ChEBI" id="CHEBI:58053"/>
    </ligand>
</feature>
<feature type="binding site" description="in other chain" evidence="2">
    <location>
        <position position="331"/>
    </location>
    <ligand>
        <name>K(+)</name>
        <dbReference type="ChEBI" id="CHEBI:29103"/>
        <note>ligand shared between two tetrameric partners</note>
    </ligand>
</feature>
<feature type="binding site" evidence="2">
    <location>
        <begin position="364"/>
        <end position="366"/>
    </location>
    <ligand>
        <name>IMP</name>
        <dbReference type="ChEBI" id="CHEBI:58053"/>
    </ligand>
</feature>
<feature type="binding site" evidence="2">
    <location>
        <begin position="387"/>
        <end position="388"/>
    </location>
    <ligand>
        <name>IMP</name>
        <dbReference type="ChEBI" id="CHEBI:58053"/>
    </ligand>
</feature>
<feature type="binding site" evidence="2">
    <location>
        <begin position="411"/>
        <end position="415"/>
    </location>
    <ligand>
        <name>IMP</name>
        <dbReference type="ChEBI" id="CHEBI:58053"/>
    </ligand>
</feature>
<feature type="binding site" evidence="2">
    <location>
        <position position="441"/>
    </location>
    <ligand>
        <name>IMP</name>
        <dbReference type="ChEBI" id="CHEBI:58053"/>
    </ligand>
</feature>
<feature type="binding site" evidence="2">
    <location>
        <position position="500"/>
    </location>
    <ligand>
        <name>K(+)</name>
        <dbReference type="ChEBI" id="CHEBI:29103"/>
        <note>ligand shared between two tetrameric partners</note>
    </ligand>
</feature>
<feature type="binding site" evidence="2">
    <location>
        <position position="501"/>
    </location>
    <ligand>
        <name>K(+)</name>
        <dbReference type="ChEBI" id="CHEBI:29103"/>
        <note>ligand shared between two tetrameric partners</note>
    </ligand>
</feature>
<feature type="binding site" evidence="2">
    <location>
        <position position="502"/>
    </location>
    <ligand>
        <name>K(+)</name>
        <dbReference type="ChEBI" id="CHEBI:29103"/>
        <note>ligand shared between two tetrameric partners</note>
    </ligand>
</feature>
<feature type="modified residue" description="Phosphoserine" evidence="1">
    <location>
        <position position="160"/>
    </location>
</feature>
<feature type="modified residue" description="Omega-N-methylarginine" evidence="4">
    <location>
        <position position="341"/>
    </location>
</feature>
<feature type="modified residue" description="Omega-N-methylarginine" evidence="4">
    <location>
        <position position="355"/>
    </location>
</feature>
<feature type="sequence conflict" description="In Ref. 1; AAA18285." evidence="3" ref="1">
    <original>QQ</original>
    <variation>HE</variation>
    <location>
        <begin position="21"/>
        <end position="22"/>
    </location>
</feature>
<feature type="sequence conflict" description="In Ref. 1; AAA18285." evidence="3" ref="1">
    <original>L</original>
    <variation>H</variation>
    <location>
        <position position="273"/>
    </location>
</feature>
<feature type="sequence conflict" description="In Ref. 1; AAA18285." evidence="3" ref="1">
    <original>M</original>
    <variation>I</variation>
    <location>
        <position position="414"/>
    </location>
</feature>
<keyword id="KW-0129">CBS domain</keyword>
<keyword id="KW-0963">Cytoplasm</keyword>
<keyword id="KW-0332">GMP biosynthesis</keyword>
<keyword id="KW-0479">Metal-binding</keyword>
<keyword id="KW-0488">Methylation</keyword>
<keyword id="KW-0520">NAD</keyword>
<keyword id="KW-0539">Nucleus</keyword>
<keyword id="KW-0560">Oxidoreductase</keyword>
<keyword id="KW-0597">Phosphoprotein</keyword>
<keyword id="KW-0630">Potassium</keyword>
<keyword id="KW-0658">Purine biosynthesis</keyword>
<keyword id="KW-1185">Reference proteome</keyword>
<keyword id="KW-0677">Repeat</keyword>
<proteinExistence type="evidence at protein level"/>
<protein>
    <recommendedName>
        <fullName evidence="2">Inosine-5'-monophosphate dehydrogenase 1</fullName>
        <shortName evidence="2">IMP dehydrogenase 1</shortName>
        <shortName evidence="2">IMPD 1</shortName>
        <shortName evidence="2">IMPDH 1</shortName>
        <ecNumber evidence="2">1.1.1.205</ecNumber>
    </recommendedName>
    <alternativeName>
        <fullName>IMPDH-I</fullName>
    </alternativeName>
</protein>
<comment type="function">
    <text evidence="2">Catalyzes the conversion of inosine 5'-phosphate (IMP) to xanthosine 5'-phosphate (XMP), the first committed and rate-limiting step in the de novo synthesis of guanine nucleotides, and therefore plays an important role in the regulation of cell growth. Could also have a single-stranded nucleic acid-binding activity and could play a role in RNA and/or DNA metabolism. It may also have a role in the development of malignancy and the growth progression of some tumors.</text>
</comment>
<comment type="catalytic activity">
    <reaction evidence="2">
        <text>IMP + NAD(+) + H2O = XMP + NADH + H(+)</text>
        <dbReference type="Rhea" id="RHEA:11708"/>
        <dbReference type="ChEBI" id="CHEBI:15377"/>
        <dbReference type="ChEBI" id="CHEBI:15378"/>
        <dbReference type="ChEBI" id="CHEBI:57464"/>
        <dbReference type="ChEBI" id="CHEBI:57540"/>
        <dbReference type="ChEBI" id="CHEBI:57945"/>
        <dbReference type="ChEBI" id="CHEBI:58053"/>
        <dbReference type="EC" id="1.1.1.205"/>
    </reaction>
</comment>
<comment type="cofactor">
    <cofactor evidence="2">
        <name>K(+)</name>
        <dbReference type="ChEBI" id="CHEBI:29103"/>
    </cofactor>
</comment>
<comment type="activity regulation">
    <text evidence="2">Mycophenolic acid (MPA) is a non-competitive inhibitor that prevents formation of the closed enzyme conformation by binding to the same site as the amobile flap. In contrast, mizoribine monophosphate (MZP) is a competitive inhibitor that induces the closed conformation. MPA is a potent inhibitor of mammalian IMPDHs but a poor inhibitor of the bacterial enzymes. MZP is a more potent inhibitor of bacterial IMPDH.</text>
</comment>
<comment type="pathway">
    <text evidence="2">Purine metabolism; XMP biosynthesis via de novo pathway; XMP from IMP: step 1/1.</text>
</comment>
<comment type="subunit">
    <text>Homotetramer.</text>
</comment>
<comment type="subcellular location">
    <subcellularLocation>
        <location evidence="2">Cytoplasm</location>
    </subcellularLocation>
    <subcellularLocation>
        <location evidence="2">Nucleus</location>
    </subcellularLocation>
</comment>
<comment type="similarity">
    <text evidence="2">Belongs to the IMPDH/GMPR family.</text>
</comment>
<evidence type="ECO:0000250" key="1">
    <source>
        <dbReference type="UniProtKB" id="P20839"/>
    </source>
</evidence>
<evidence type="ECO:0000255" key="2">
    <source>
        <dbReference type="HAMAP-Rule" id="MF_03156"/>
    </source>
</evidence>
<evidence type="ECO:0000305" key="3"/>
<evidence type="ECO:0007744" key="4">
    <source>
    </source>
</evidence>
<dbReference type="EC" id="1.1.1.205" evidence="2"/>
<dbReference type="EMBL" id="U00978">
    <property type="protein sequence ID" value="AAA18285.1"/>
    <property type="molecule type" value="mRNA"/>
</dbReference>
<dbReference type="EMBL" id="AK171139">
    <property type="protein sequence ID" value="BAE42272.1"/>
    <property type="molecule type" value="mRNA"/>
</dbReference>
<dbReference type="EMBL" id="CH466533">
    <property type="protein sequence ID" value="EDL13790.1"/>
    <property type="molecule type" value="Genomic_DNA"/>
</dbReference>
<dbReference type="EMBL" id="BC053416">
    <property type="protein sequence ID" value="AAH53416.1"/>
    <property type="molecule type" value="mRNA"/>
</dbReference>
<dbReference type="CCDS" id="CCDS39449.1"/>
<dbReference type="RefSeq" id="NP_001289862.1">
    <property type="nucleotide sequence ID" value="NM_001302933.1"/>
</dbReference>
<dbReference type="RefSeq" id="NP_001289863.1">
    <property type="nucleotide sequence ID" value="NM_001302934.1"/>
</dbReference>
<dbReference type="RefSeq" id="NP_035959.2">
    <property type="nucleotide sequence ID" value="NM_011829.3"/>
</dbReference>
<dbReference type="SMR" id="P50096"/>
<dbReference type="BioGRID" id="204791">
    <property type="interactions" value="34"/>
</dbReference>
<dbReference type="FunCoup" id="P50096">
    <property type="interactions" value="1549"/>
</dbReference>
<dbReference type="IntAct" id="P50096">
    <property type="interactions" value="1"/>
</dbReference>
<dbReference type="STRING" id="10090.ENSMUSP00000124931"/>
<dbReference type="iPTMnet" id="P50096"/>
<dbReference type="PhosphoSitePlus" id="P50096"/>
<dbReference type="PaxDb" id="10090-ENSMUSP00000077289"/>
<dbReference type="ProteomicsDB" id="267244"/>
<dbReference type="Pumba" id="P50096"/>
<dbReference type="Antibodypedia" id="17770">
    <property type="antibodies" value="274 antibodies from 35 providers"/>
</dbReference>
<dbReference type="DNASU" id="23917"/>
<dbReference type="Ensembl" id="ENSMUST00000078155.12">
    <property type="protein sequence ID" value="ENSMUSP00000077289.6"/>
    <property type="gene ID" value="ENSMUSG00000003500.14"/>
</dbReference>
<dbReference type="Ensembl" id="ENSMUST00000159124.8">
    <property type="protein sequence ID" value="ENSMUSP00000124931.2"/>
    <property type="gene ID" value="ENSMUSG00000003500.14"/>
</dbReference>
<dbReference type="Ensembl" id="ENSMUST00000162099.8">
    <property type="protein sequence ID" value="ENSMUSP00000124541.2"/>
    <property type="gene ID" value="ENSMUSG00000003500.14"/>
</dbReference>
<dbReference type="GeneID" id="23917"/>
<dbReference type="KEGG" id="mmu:23917"/>
<dbReference type="UCSC" id="uc009bda.2">
    <property type="organism name" value="mouse"/>
</dbReference>
<dbReference type="AGR" id="MGI:96567"/>
<dbReference type="CTD" id="3614"/>
<dbReference type="MGI" id="MGI:96567">
    <property type="gene designation" value="Impdh1"/>
</dbReference>
<dbReference type="VEuPathDB" id="HostDB:ENSMUSG00000003500"/>
<dbReference type="eggNOG" id="KOG2550">
    <property type="taxonomic scope" value="Eukaryota"/>
</dbReference>
<dbReference type="GeneTree" id="ENSGT00940000154156"/>
<dbReference type="InParanoid" id="P50096"/>
<dbReference type="OMA" id="MGYCGAK"/>
<dbReference type="TreeFam" id="TF300378"/>
<dbReference type="BRENDA" id="1.1.1.205">
    <property type="organism ID" value="3474"/>
</dbReference>
<dbReference type="Reactome" id="R-MMU-6798695">
    <property type="pathway name" value="Neutrophil degranulation"/>
</dbReference>
<dbReference type="Reactome" id="R-MMU-73817">
    <property type="pathway name" value="Purine ribonucleoside monophosphate biosynthesis"/>
</dbReference>
<dbReference type="Reactome" id="R-MMU-9748787">
    <property type="pathway name" value="Azathioprine ADME"/>
</dbReference>
<dbReference type="UniPathway" id="UPA00601">
    <property type="reaction ID" value="UER00295"/>
</dbReference>
<dbReference type="BioGRID-ORCS" id="23917">
    <property type="hits" value="4 hits in 77 CRISPR screens"/>
</dbReference>
<dbReference type="ChiTaRS" id="Impdh1">
    <property type="organism name" value="mouse"/>
</dbReference>
<dbReference type="PRO" id="PR:P50096"/>
<dbReference type="Proteomes" id="UP000000589">
    <property type="component" value="Chromosome 6"/>
</dbReference>
<dbReference type="RNAct" id="P50096">
    <property type="molecule type" value="protein"/>
</dbReference>
<dbReference type="Bgee" id="ENSMUSG00000003500">
    <property type="expression patterns" value="Expressed in retinal neural layer and 200 other cell types or tissues"/>
</dbReference>
<dbReference type="ExpressionAtlas" id="P50096">
    <property type="expression patterns" value="baseline and differential"/>
</dbReference>
<dbReference type="GO" id="GO:0005737">
    <property type="term" value="C:cytoplasm"/>
    <property type="evidence" value="ECO:0000250"/>
    <property type="project" value="UniProtKB"/>
</dbReference>
<dbReference type="GO" id="GO:0005634">
    <property type="term" value="C:nucleus"/>
    <property type="evidence" value="ECO:0000250"/>
    <property type="project" value="UniProtKB"/>
</dbReference>
<dbReference type="GO" id="GO:0003677">
    <property type="term" value="F:DNA binding"/>
    <property type="evidence" value="ECO:0000250"/>
    <property type="project" value="UniProtKB"/>
</dbReference>
<dbReference type="GO" id="GO:0003938">
    <property type="term" value="F:IMP dehydrogenase activity"/>
    <property type="evidence" value="ECO:0000314"/>
    <property type="project" value="MGI"/>
</dbReference>
<dbReference type="GO" id="GO:0046872">
    <property type="term" value="F:metal ion binding"/>
    <property type="evidence" value="ECO:0007669"/>
    <property type="project" value="UniProtKB-UniRule"/>
</dbReference>
<dbReference type="GO" id="GO:0003676">
    <property type="term" value="F:nucleic acid binding"/>
    <property type="evidence" value="ECO:0000250"/>
    <property type="project" value="UniProtKB"/>
</dbReference>
<dbReference type="GO" id="GO:0000166">
    <property type="term" value="F:nucleotide binding"/>
    <property type="evidence" value="ECO:0007669"/>
    <property type="project" value="UniProtKB-UniRule"/>
</dbReference>
<dbReference type="GO" id="GO:0097294">
    <property type="term" value="P:'de novo' XMP biosynthetic process"/>
    <property type="evidence" value="ECO:0000315"/>
    <property type="project" value="MGI"/>
</dbReference>
<dbReference type="GO" id="GO:0006177">
    <property type="term" value="P:GMP biosynthetic process"/>
    <property type="evidence" value="ECO:0000315"/>
    <property type="project" value="MGI"/>
</dbReference>
<dbReference type="GO" id="GO:0032263">
    <property type="term" value="P:GMP salvage"/>
    <property type="evidence" value="ECO:0000304"/>
    <property type="project" value="MGI"/>
</dbReference>
<dbReference type="GO" id="GO:0046651">
    <property type="term" value="P:lymphocyte proliferation"/>
    <property type="evidence" value="ECO:0000315"/>
    <property type="project" value="MGI"/>
</dbReference>
<dbReference type="GO" id="GO:0006164">
    <property type="term" value="P:purine nucleotide biosynthetic process"/>
    <property type="evidence" value="ECO:0000315"/>
    <property type="project" value="MGI"/>
</dbReference>
<dbReference type="CDD" id="cd04601">
    <property type="entry name" value="CBS_pair_IMPDH"/>
    <property type="match status" value="1"/>
</dbReference>
<dbReference type="CDD" id="cd00381">
    <property type="entry name" value="IMPDH"/>
    <property type="match status" value="1"/>
</dbReference>
<dbReference type="FunFam" id="3.20.20.70:FF:000007">
    <property type="entry name" value="Chromosome 19 SCAF14664, whole genome shotgun sequence"/>
    <property type="match status" value="1"/>
</dbReference>
<dbReference type="Gene3D" id="3.20.20.70">
    <property type="entry name" value="Aldolase class I"/>
    <property type="match status" value="1"/>
</dbReference>
<dbReference type="HAMAP" id="MF_01964">
    <property type="entry name" value="IMPDH"/>
    <property type="match status" value="1"/>
</dbReference>
<dbReference type="InterPro" id="IPR013785">
    <property type="entry name" value="Aldolase_TIM"/>
</dbReference>
<dbReference type="InterPro" id="IPR000644">
    <property type="entry name" value="CBS_dom"/>
</dbReference>
<dbReference type="InterPro" id="IPR005990">
    <property type="entry name" value="IMP_DH"/>
</dbReference>
<dbReference type="InterPro" id="IPR015875">
    <property type="entry name" value="IMP_DH/GMP_Rdtase_CS"/>
</dbReference>
<dbReference type="InterPro" id="IPR001093">
    <property type="entry name" value="IMP_DH_GMPRt"/>
</dbReference>
<dbReference type="NCBIfam" id="TIGR01302">
    <property type="entry name" value="IMP_dehydrog"/>
    <property type="match status" value="1"/>
</dbReference>
<dbReference type="PANTHER" id="PTHR11911:SF74">
    <property type="entry name" value="INOSINE-5'-MONOPHOSPHATE DEHYDROGENASE 1"/>
    <property type="match status" value="1"/>
</dbReference>
<dbReference type="PANTHER" id="PTHR11911">
    <property type="entry name" value="INOSINE-5-MONOPHOSPHATE DEHYDROGENASE RELATED"/>
    <property type="match status" value="1"/>
</dbReference>
<dbReference type="Pfam" id="PF00571">
    <property type="entry name" value="CBS"/>
    <property type="match status" value="2"/>
</dbReference>
<dbReference type="Pfam" id="PF00478">
    <property type="entry name" value="IMPDH"/>
    <property type="match status" value="1"/>
</dbReference>
<dbReference type="PIRSF" id="PIRSF000130">
    <property type="entry name" value="IMPDH"/>
    <property type="match status" value="1"/>
</dbReference>
<dbReference type="SMART" id="SM00116">
    <property type="entry name" value="CBS"/>
    <property type="match status" value="2"/>
</dbReference>
<dbReference type="SMART" id="SM01240">
    <property type="entry name" value="IMPDH"/>
    <property type="match status" value="1"/>
</dbReference>
<dbReference type="SUPFAM" id="SSF51412">
    <property type="entry name" value="Inosine monophosphate dehydrogenase (IMPDH)"/>
    <property type="match status" value="2"/>
</dbReference>
<dbReference type="PROSITE" id="PS51371">
    <property type="entry name" value="CBS"/>
    <property type="match status" value="2"/>
</dbReference>
<dbReference type="PROSITE" id="PS00487">
    <property type="entry name" value="IMP_DH_GMP_RED"/>
    <property type="match status" value="1"/>
</dbReference>
<organism>
    <name type="scientific">Mus musculus</name>
    <name type="common">Mouse</name>
    <dbReference type="NCBI Taxonomy" id="10090"/>
    <lineage>
        <taxon>Eukaryota</taxon>
        <taxon>Metazoa</taxon>
        <taxon>Chordata</taxon>
        <taxon>Craniata</taxon>
        <taxon>Vertebrata</taxon>
        <taxon>Euteleostomi</taxon>
        <taxon>Mammalia</taxon>
        <taxon>Eutheria</taxon>
        <taxon>Euarchontoglires</taxon>
        <taxon>Glires</taxon>
        <taxon>Rodentia</taxon>
        <taxon>Myomorpha</taxon>
        <taxon>Muroidea</taxon>
        <taxon>Muridae</taxon>
        <taxon>Murinae</taxon>
        <taxon>Mus</taxon>
        <taxon>Mus</taxon>
    </lineage>
</organism>
<name>IMDH1_MOUSE</name>